<dbReference type="EC" id="2.1.1.192" evidence="1"/>
<dbReference type="EMBL" id="AP006840">
    <property type="protein sequence ID" value="BAD40336.1"/>
    <property type="molecule type" value="Genomic_DNA"/>
</dbReference>
<dbReference type="RefSeq" id="WP_011195481.1">
    <property type="nucleotide sequence ID" value="NC_006177.1"/>
</dbReference>
<dbReference type="SMR" id="Q67PQ7"/>
<dbReference type="STRING" id="292459.STH1351"/>
<dbReference type="KEGG" id="sth:STH1351"/>
<dbReference type="eggNOG" id="COG0820">
    <property type="taxonomic scope" value="Bacteria"/>
</dbReference>
<dbReference type="HOGENOM" id="CLU_029101_0_1_9"/>
<dbReference type="Proteomes" id="UP000000417">
    <property type="component" value="Chromosome"/>
</dbReference>
<dbReference type="GO" id="GO:0005737">
    <property type="term" value="C:cytoplasm"/>
    <property type="evidence" value="ECO:0007669"/>
    <property type="project" value="UniProtKB-SubCell"/>
</dbReference>
<dbReference type="GO" id="GO:0051539">
    <property type="term" value="F:4 iron, 4 sulfur cluster binding"/>
    <property type="evidence" value="ECO:0007669"/>
    <property type="project" value="UniProtKB-UniRule"/>
</dbReference>
<dbReference type="GO" id="GO:0046872">
    <property type="term" value="F:metal ion binding"/>
    <property type="evidence" value="ECO:0007669"/>
    <property type="project" value="UniProtKB-KW"/>
</dbReference>
<dbReference type="GO" id="GO:0070040">
    <property type="term" value="F:rRNA (adenine(2503)-C2-)-methyltransferase activity"/>
    <property type="evidence" value="ECO:0007669"/>
    <property type="project" value="UniProtKB-UniRule"/>
</dbReference>
<dbReference type="GO" id="GO:0019843">
    <property type="term" value="F:rRNA binding"/>
    <property type="evidence" value="ECO:0007669"/>
    <property type="project" value="UniProtKB-UniRule"/>
</dbReference>
<dbReference type="GO" id="GO:0002935">
    <property type="term" value="F:tRNA (adenine(37)-C2)-methyltransferase activity"/>
    <property type="evidence" value="ECO:0007669"/>
    <property type="project" value="UniProtKB-UniRule"/>
</dbReference>
<dbReference type="GO" id="GO:0000049">
    <property type="term" value="F:tRNA binding"/>
    <property type="evidence" value="ECO:0007669"/>
    <property type="project" value="UniProtKB-UniRule"/>
</dbReference>
<dbReference type="GO" id="GO:0070475">
    <property type="term" value="P:rRNA base methylation"/>
    <property type="evidence" value="ECO:0007669"/>
    <property type="project" value="UniProtKB-UniRule"/>
</dbReference>
<dbReference type="GO" id="GO:0030488">
    <property type="term" value="P:tRNA methylation"/>
    <property type="evidence" value="ECO:0007669"/>
    <property type="project" value="UniProtKB-UniRule"/>
</dbReference>
<dbReference type="CDD" id="cd01335">
    <property type="entry name" value="Radical_SAM"/>
    <property type="match status" value="1"/>
</dbReference>
<dbReference type="FunFam" id="3.20.20.70:FF:000014">
    <property type="entry name" value="Probable dual-specificity RNA methyltransferase RlmN"/>
    <property type="match status" value="1"/>
</dbReference>
<dbReference type="Gene3D" id="1.10.150.530">
    <property type="match status" value="1"/>
</dbReference>
<dbReference type="Gene3D" id="3.20.20.70">
    <property type="entry name" value="Aldolase class I"/>
    <property type="match status" value="1"/>
</dbReference>
<dbReference type="HAMAP" id="MF_01849">
    <property type="entry name" value="RNA_methyltr_RlmN"/>
    <property type="match status" value="1"/>
</dbReference>
<dbReference type="InterPro" id="IPR013785">
    <property type="entry name" value="Aldolase_TIM"/>
</dbReference>
<dbReference type="InterPro" id="IPR006638">
    <property type="entry name" value="Elp3/MiaA/NifB-like_rSAM"/>
</dbReference>
<dbReference type="InterPro" id="IPR040072">
    <property type="entry name" value="Methyltransferase_A"/>
</dbReference>
<dbReference type="InterPro" id="IPR048641">
    <property type="entry name" value="RlmN_N"/>
</dbReference>
<dbReference type="InterPro" id="IPR027492">
    <property type="entry name" value="RNA_MTrfase_RlmN"/>
</dbReference>
<dbReference type="InterPro" id="IPR004383">
    <property type="entry name" value="rRNA_lsu_MTrfase_RlmN/Cfr"/>
</dbReference>
<dbReference type="InterPro" id="IPR007197">
    <property type="entry name" value="rSAM"/>
</dbReference>
<dbReference type="NCBIfam" id="TIGR00048">
    <property type="entry name" value="rRNA_mod_RlmN"/>
    <property type="match status" value="1"/>
</dbReference>
<dbReference type="PANTHER" id="PTHR30544">
    <property type="entry name" value="23S RRNA METHYLTRANSFERASE"/>
    <property type="match status" value="1"/>
</dbReference>
<dbReference type="PANTHER" id="PTHR30544:SF5">
    <property type="entry name" value="RADICAL SAM CORE DOMAIN-CONTAINING PROTEIN"/>
    <property type="match status" value="1"/>
</dbReference>
<dbReference type="Pfam" id="PF04055">
    <property type="entry name" value="Radical_SAM"/>
    <property type="match status" value="1"/>
</dbReference>
<dbReference type="Pfam" id="PF21016">
    <property type="entry name" value="RlmN_N"/>
    <property type="match status" value="1"/>
</dbReference>
<dbReference type="PIRSF" id="PIRSF006004">
    <property type="entry name" value="CHP00048"/>
    <property type="match status" value="1"/>
</dbReference>
<dbReference type="SFLD" id="SFLDF00275">
    <property type="entry name" value="adenosine_C2_methyltransferase"/>
    <property type="match status" value="1"/>
</dbReference>
<dbReference type="SFLD" id="SFLDG01062">
    <property type="entry name" value="methyltransferase_(Class_A)"/>
    <property type="match status" value="1"/>
</dbReference>
<dbReference type="SMART" id="SM00729">
    <property type="entry name" value="Elp3"/>
    <property type="match status" value="1"/>
</dbReference>
<dbReference type="SUPFAM" id="SSF102114">
    <property type="entry name" value="Radical SAM enzymes"/>
    <property type="match status" value="1"/>
</dbReference>
<dbReference type="PROSITE" id="PS51918">
    <property type="entry name" value="RADICAL_SAM"/>
    <property type="match status" value="1"/>
</dbReference>
<comment type="function">
    <text evidence="1">Specifically methylates position 2 of adenine 2503 in 23S rRNA and position 2 of adenine 37 in tRNAs.</text>
</comment>
<comment type="catalytic activity">
    <reaction evidence="1">
        <text>adenosine(2503) in 23S rRNA + 2 reduced [2Fe-2S]-[ferredoxin] + 2 S-adenosyl-L-methionine = 2-methyladenosine(2503) in 23S rRNA + 5'-deoxyadenosine + L-methionine + 2 oxidized [2Fe-2S]-[ferredoxin] + S-adenosyl-L-homocysteine</text>
        <dbReference type="Rhea" id="RHEA:42916"/>
        <dbReference type="Rhea" id="RHEA-COMP:10000"/>
        <dbReference type="Rhea" id="RHEA-COMP:10001"/>
        <dbReference type="Rhea" id="RHEA-COMP:10152"/>
        <dbReference type="Rhea" id="RHEA-COMP:10282"/>
        <dbReference type="ChEBI" id="CHEBI:17319"/>
        <dbReference type="ChEBI" id="CHEBI:33737"/>
        <dbReference type="ChEBI" id="CHEBI:33738"/>
        <dbReference type="ChEBI" id="CHEBI:57844"/>
        <dbReference type="ChEBI" id="CHEBI:57856"/>
        <dbReference type="ChEBI" id="CHEBI:59789"/>
        <dbReference type="ChEBI" id="CHEBI:74411"/>
        <dbReference type="ChEBI" id="CHEBI:74497"/>
        <dbReference type="EC" id="2.1.1.192"/>
    </reaction>
</comment>
<comment type="catalytic activity">
    <reaction evidence="1">
        <text>adenosine(37) in tRNA + 2 reduced [2Fe-2S]-[ferredoxin] + 2 S-adenosyl-L-methionine = 2-methyladenosine(37) in tRNA + 5'-deoxyadenosine + L-methionine + 2 oxidized [2Fe-2S]-[ferredoxin] + S-adenosyl-L-homocysteine</text>
        <dbReference type="Rhea" id="RHEA:43332"/>
        <dbReference type="Rhea" id="RHEA-COMP:10000"/>
        <dbReference type="Rhea" id="RHEA-COMP:10001"/>
        <dbReference type="Rhea" id="RHEA-COMP:10162"/>
        <dbReference type="Rhea" id="RHEA-COMP:10485"/>
        <dbReference type="ChEBI" id="CHEBI:17319"/>
        <dbReference type="ChEBI" id="CHEBI:33737"/>
        <dbReference type="ChEBI" id="CHEBI:33738"/>
        <dbReference type="ChEBI" id="CHEBI:57844"/>
        <dbReference type="ChEBI" id="CHEBI:57856"/>
        <dbReference type="ChEBI" id="CHEBI:59789"/>
        <dbReference type="ChEBI" id="CHEBI:74411"/>
        <dbReference type="ChEBI" id="CHEBI:74497"/>
        <dbReference type="EC" id="2.1.1.192"/>
    </reaction>
</comment>
<comment type="cofactor">
    <cofactor evidence="1">
        <name>[4Fe-4S] cluster</name>
        <dbReference type="ChEBI" id="CHEBI:49883"/>
    </cofactor>
    <text evidence="1">Binds 1 [4Fe-4S] cluster. The cluster is coordinated with 3 cysteines and an exchangeable S-adenosyl-L-methionine.</text>
</comment>
<comment type="subcellular location">
    <subcellularLocation>
        <location evidence="1">Cytoplasm</location>
    </subcellularLocation>
</comment>
<comment type="miscellaneous">
    <text evidence="1">Reaction proceeds by a ping-pong mechanism involving intermediate methylation of a conserved cysteine residue.</text>
</comment>
<comment type="similarity">
    <text evidence="1">Belongs to the radical SAM superfamily. RlmN family.</text>
</comment>
<keyword id="KW-0004">4Fe-4S</keyword>
<keyword id="KW-0963">Cytoplasm</keyword>
<keyword id="KW-1015">Disulfide bond</keyword>
<keyword id="KW-0408">Iron</keyword>
<keyword id="KW-0411">Iron-sulfur</keyword>
<keyword id="KW-0479">Metal-binding</keyword>
<keyword id="KW-0489">Methyltransferase</keyword>
<keyword id="KW-1185">Reference proteome</keyword>
<keyword id="KW-0698">rRNA processing</keyword>
<keyword id="KW-0949">S-adenosyl-L-methionine</keyword>
<keyword id="KW-0808">Transferase</keyword>
<keyword id="KW-0819">tRNA processing</keyword>
<gene>
    <name evidence="1" type="primary">rlmN</name>
    <name type="ordered locus">STH1351</name>
</gene>
<evidence type="ECO:0000255" key="1">
    <source>
        <dbReference type="HAMAP-Rule" id="MF_01849"/>
    </source>
</evidence>
<evidence type="ECO:0000255" key="2">
    <source>
        <dbReference type="PROSITE-ProRule" id="PRU01266"/>
    </source>
</evidence>
<name>RLMN_SYMTH</name>
<accession>Q67PQ7</accession>
<sequence>MQESGYVPLKIADPALLFAELGRQPLPGMSLEEMADLMADLGEPRFRAKQLFQWVYQKGVKDFDAMTNLPARLRQHLAGTTMLRLLEKETEQHDRRTGTTKYLFRLADGSQVESVLMRQSWGNSVCVTTQVGCRMGCTFCASTVGGLVRNLTAGEIVDQIVMMQRELPQGERISTVVLMGSGEPLENYDHVLKAVRLVHDPEGLNIGYRHITISTSGIVPGMRRLAEEGLPITLALSLHAPTDELRRQLMPVARIWPLAEVLAAAREYGEKTGRRVTYEYILIEGVNDGPEEARQLARLLKGALAHVNLIPMNPVAERPQYRRPGPERVNRFKEILESNGIATTVRREMGGEIDAACGQLRNRAQRKHMGR</sequence>
<proteinExistence type="inferred from homology"/>
<organism>
    <name type="scientific">Symbiobacterium thermophilum (strain DSM 24528 / JCM 14929 / IAM 14863 / T)</name>
    <dbReference type="NCBI Taxonomy" id="292459"/>
    <lineage>
        <taxon>Bacteria</taxon>
        <taxon>Bacillati</taxon>
        <taxon>Bacillota</taxon>
        <taxon>Clostridia</taxon>
        <taxon>Eubacteriales</taxon>
        <taxon>Symbiobacteriaceae</taxon>
        <taxon>Symbiobacterium</taxon>
    </lineage>
</organism>
<feature type="chain" id="PRO_0000350478" description="Probable dual-specificity RNA methyltransferase RlmN">
    <location>
        <begin position="1"/>
        <end position="371"/>
    </location>
</feature>
<feature type="domain" description="Radical SAM core" evidence="2">
    <location>
        <begin position="119"/>
        <end position="352"/>
    </location>
</feature>
<feature type="active site" description="Proton acceptor" evidence="1">
    <location>
        <position position="113"/>
    </location>
</feature>
<feature type="active site" description="S-methylcysteine intermediate" evidence="1">
    <location>
        <position position="357"/>
    </location>
</feature>
<feature type="binding site" evidence="1">
    <location>
        <position position="133"/>
    </location>
    <ligand>
        <name>[4Fe-4S] cluster</name>
        <dbReference type="ChEBI" id="CHEBI:49883"/>
        <note>4Fe-4S-S-AdoMet</note>
    </ligand>
</feature>
<feature type="binding site" evidence="1">
    <location>
        <position position="137"/>
    </location>
    <ligand>
        <name>[4Fe-4S] cluster</name>
        <dbReference type="ChEBI" id="CHEBI:49883"/>
        <note>4Fe-4S-S-AdoMet</note>
    </ligand>
</feature>
<feature type="binding site" evidence="1">
    <location>
        <position position="140"/>
    </location>
    <ligand>
        <name>[4Fe-4S] cluster</name>
        <dbReference type="ChEBI" id="CHEBI:49883"/>
        <note>4Fe-4S-S-AdoMet</note>
    </ligand>
</feature>
<feature type="binding site" evidence="1">
    <location>
        <begin position="182"/>
        <end position="183"/>
    </location>
    <ligand>
        <name>S-adenosyl-L-methionine</name>
        <dbReference type="ChEBI" id="CHEBI:59789"/>
    </ligand>
</feature>
<feature type="binding site" evidence="1">
    <location>
        <position position="214"/>
    </location>
    <ligand>
        <name>S-adenosyl-L-methionine</name>
        <dbReference type="ChEBI" id="CHEBI:59789"/>
    </ligand>
</feature>
<feature type="binding site" evidence="1">
    <location>
        <begin position="237"/>
        <end position="239"/>
    </location>
    <ligand>
        <name>S-adenosyl-L-methionine</name>
        <dbReference type="ChEBI" id="CHEBI:59789"/>
    </ligand>
</feature>
<feature type="binding site" evidence="1">
    <location>
        <position position="313"/>
    </location>
    <ligand>
        <name>S-adenosyl-L-methionine</name>
        <dbReference type="ChEBI" id="CHEBI:59789"/>
    </ligand>
</feature>
<feature type="disulfide bond" description="(transient)" evidence="1">
    <location>
        <begin position="126"/>
        <end position="357"/>
    </location>
</feature>
<protein>
    <recommendedName>
        <fullName evidence="1">Probable dual-specificity RNA methyltransferase RlmN</fullName>
        <ecNumber evidence="1">2.1.1.192</ecNumber>
    </recommendedName>
    <alternativeName>
        <fullName evidence="1">23S rRNA (adenine(2503)-C(2))-methyltransferase</fullName>
    </alternativeName>
    <alternativeName>
        <fullName evidence="1">23S rRNA m2A2503 methyltransferase</fullName>
    </alternativeName>
    <alternativeName>
        <fullName evidence="1">Ribosomal RNA large subunit methyltransferase N</fullName>
    </alternativeName>
    <alternativeName>
        <fullName evidence="1">tRNA (adenine(37)-C(2))-methyltransferase</fullName>
    </alternativeName>
    <alternativeName>
        <fullName evidence="1">tRNA m2A37 methyltransferase</fullName>
    </alternativeName>
</protein>
<reference key="1">
    <citation type="journal article" date="2004" name="Nucleic Acids Res.">
        <title>Genome sequence of Symbiobacterium thermophilum, an uncultivable bacterium that depends on microbial commensalism.</title>
        <authorList>
            <person name="Ueda K."/>
            <person name="Yamashita A."/>
            <person name="Ishikawa J."/>
            <person name="Shimada M."/>
            <person name="Watsuji T."/>
            <person name="Morimura K."/>
            <person name="Ikeda H."/>
            <person name="Hattori M."/>
            <person name="Beppu T."/>
        </authorList>
    </citation>
    <scope>NUCLEOTIDE SEQUENCE [LARGE SCALE GENOMIC DNA]</scope>
    <source>
        <strain>DSM 24528 / JCM 14929 / IAM 14863 / T</strain>
    </source>
</reference>